<dbReference type="EMBL" id="AE003852">
    <property type="protein sequence ID" value="AAF95653.1"/>
    <property type="molecule type" value="Genomic_DNA"/>
</dbReference>
<dbReference type="PIR" id="A82067">
    <property type="entry name" value="A82067"/>
</dbReference>
<dbReference type="RefSeq" id="NP_232140.1">
    <property type="nucleotide sequence ID" value="NC_002505.1"/>
</dbReference>
<dbReference type="RefSeq" id="WP_000032502.1">
    <property type="nucleotide sequence ID" value="NZ_LT906614.1"/>
</dbReference>
<dbReference type="SMR" id="Q9KP65"/>
<dbReference type="STRING" id="243277.VC_2511"/>
<dbReference type="DNASU" id="2615175"/>
<dbReference type="EnsemblBacteria" id="AAF95653">
    <property type="protein sequence ID" value="AAF95653"/>
    <property type="gene ID" value="VC_2511"/>
</dbReference>
<dbReference type="GeneID" id="89513508"/>
<dbReference type="KEGG" id="vch:VC_2511"/>
<dbReference type="PATRIC" id="fig|243277.26.peg.2392"/>
<dbReference type="eggNOG" id="COG1781">
    <property type="taxonomic scope" value="Bacteria"/>
</dbReference>
<dbReference type="HOGENOM" id="CLU_128576_0_0_6"/>
<dbReference type="Proteomes" id="UP000000584">
    <property type="component" value="Chromosome 1"/>
</dbReference>
<dbReference type="GO" id="GO:0009347">
    <property type="term" value="C:aspartate carbamoyltransferase complex"/>
    <property type="evidence" value="ECO:0000318"/>
    <property type="project" value="GO_Central"/>
</dbReference>
<dbReference type="GO" id="GO:0046872">
    <property type="term" value="F:metal ion binding"/>
    <property type="evidence" value="ECO:0007669"/>
    <property type="project" value="UniProtKB-KW"/>
</dbReference>
<dbReference type="GO" id="GO:0006207">
    <property type="term" value="P:'de novo' pyrimidine nucleobase biosynthetic process"/>
    <property type="evidence" value="ECO:0000318"/>
    <property type="project" value="GO_Central"/>
</dbReference>
<dbReference type="GO" id="GO:0006221">
    <property type="term" value="P:pyrimidine nucleotide biosynthetic process"/>
    <property type="evidence" value="ECO:0007669"/>
    <property type="project" value="UniProtKB-UniRule"/>
</dbReference>
<dbReference type="Gene3D" id="2.30.30.20">
    <property type="entry name" value="Aspartate carbamoyltransferase regulatory subunit, C-terminal domain"/>
    <property type="match status" value="1"/>
</dbReference>
<dbReference type="Gene3D" id="3.30.70.140">
    <property type="entry name" value="Aspartate carbamoyltransferase regulatory subunit, N-terminal domain"/>
    <property type="match status" value="1"/>
</dbReference>
<dbReference type="HAMAP" id="MF_00002">
    <property type="entry name" value="Asp_carb_tr_reg"/>
    <property type="match status" value="1"/>
</dbReference>
<dbReference type="InterPro" id="IPR020545">
    <property type="entry name" value="Asp_carbamoyltransf_reg_N"/>
</dbReference>
<dbReference type="InterPro" id="IPR002801">
    <property type="entry name" value="Asp_carbamoylTrfase_reg"/>
</dbReference>
<dbReference type="InterPro" id="IPR020542">
    <property type="entry name" value="Asp_carbamoyltrfase_reg_C"/>
</dbReference>
<dbReference type="InterPro" id="IPR036792">
    <property type="entry name" value="Asp_carbatrfase_reg_C_sf"/>
</dbReference>
<dbReference type="InterPro" id="IPR036793">
    <property type="entry name" value="Asp_carbatrfase_reg_N_sf"/>
</dbReference>
<dbReference type="NCBIfam" id="TIGR00240">
    <property type="entry name" value="ATCase_reg"/>
    <property type="match status" value="1"/>
</dbReference>
<dbReference type="PANTHER" id="PTHR35805">
    <property type="entry name" value="ASPARTATE CARBAMOYLTRANSFERASE REGULATORY CHAIN"/>
    <property type="match status" value="1"/>
</dbReference>
<dbReference type="PANTHER" id="PTHR35805:SF1">
    <property type="entry name" value="ASPARTATE CARBAMOYLTRANSFERASE REGULATORY CHAIN"/>
    <property type="match status" value="1"/>
</dbReference>
<dbReference type="Pfam" id="PF01948">
    <property type="entry name" value="PyrI"/>
    <property type="match status" value="1"/>
</dbReference>
<dbReference type="Pfam" id="PF02748">
    <property type="entry name" value="PyrI_C"/>
    <property type="match status" value="1"/>
</dbReference>
<dbReference type="SUPFAM" id="SSF57825">
    <property type="entry name" value="Aspartate carbamoyltransferase, Regulatory-chain, C-terminal domain"/>
    <property type="match status" value="1"/>
</dbReference>
<dbReference type="SUPFAM" id="SSF54893">
    <property type="entry name" value="Aspartate carbamoyltransferase, Regulatory-chain, N-terminal domain"/>
    <property type="match status" value="1"/>
</dbReference>
<sequence length="155" mass="17276">MSKETKLQVEAIKNGTVIDHIPAKVGIKVLKLFDMHNSAQRVTIGLNLPSSALGSKDLLKIENVFISEAQANKLALYAPHATVNQIENYEVVKKLALQLPERINNVFACPNSNCISHNEPVESSFKLSEKNNDIRLKCKYCEKVFARDVVTEIEA</sequence>
<feature type="chain" id="PRO_0000142317" description="Aspartate carbamoyltransferase regulatory chain">
    <location>
        <begin position="1"/>
        <end position="155"/>
    </location>
</feature>
<feature type="binding site" evidence="1">
    <location>
        <position position="109"/>
    </location>
    <ligand>
        <name>Zn(2+)</name>
        <dbReference type="ChEBI" id="CHEBI:29105"/>
    </ligand>
</feature>
<feature type="binding site" evidence="1">
    <location>
        <position position="114"/>
    </location>
    <ligand>
        <name>Zn(2+)</name>
        <dbReference type="ChEBI" id="CHEBI:29105"/>
    </ligand>
</feature>
<feature type="binding site" evidence="1">
    <location>
        <position position="138"/>
    </location>
    <ligand>
        <name>Zn(2+)</name>
        <dbReference type="ChEBI" id="CHEBI:29105"/>
    </ligand>
</feature>
<feature type="binding site" evidence="1">
    <location>
        <position position="141"/>
    </location>
    <ligand>
        <name>Zn(2+)</name>
        <dbReference type="ChEBI" id="CHEBI:29105"/>
    </ligand>
</feature>
<evidence type="ECO:0000255" key="1">
    <source>
        <dbReference type="HAMAP-Rule" id="MF_00002"/>
    </source>
</evidence>
<organism>
    <name type="scientific">Vibrio cholerae serotype O1 (strain ATCC 39315 / El Tor Inaba N16961)</name>
    <dbReference type="NCBI Taxonomy" id="243277"/>
    <lineage>
        <taxon>Bacteria</taxon>
        <taxon>Pseudomonadati</taxon>
        <taxon>Pseudomonadota</taxon>
        <taxon>Gammaproteobacteria</taxon>
        <taxon>Vibrionales</taxon>
        <taxon>Vibrionaceae</taxon>
        <taxon>Vibrio</taxon>
    </lineage>
</organism>
<keyword id="KW-0479">Metal-binding</keyword>
<keyword id="KW-0665">Pyrimidine biosynthesis</keyword>
<keyword id="KW-1185">Reference proteome</keyword>
<keyword id="KW-0862">Zinc</keyword>
<name>PYRI_VIBCH</name>
<protein>
    <recommendedName>
        <fullName evidence="1">Aspartate carbamoyltransferase regulatory chain</fullName>
    </recommendedName>
</protein>
<comment type="function">
    <text evidence="1">Involved in allosteric regulation of aspartate carbamoyltransferase.</text>
</comment>
<comment type="cofactor">
    <cofactor evidence="1">
        <name>Zn(2+)</name>
        <dbReference type="ChEBI" id="CHEBI:29105"/>
    </cofactor>
    <text evidence="1">Binds 1 zinc ion per subunit.</text>
</comment>
<comment type="subunit">
    <text evidence="1">Contains catalytic and regulatory chains.</text>
</comment>
<comment type="similarity">
    <text evidence="1">Belongs to the PyrI family.</text>
</comment>
<reference key="1">
    <citation type="journal article" date="2000" name="Nature">
        <title>DNA sequence of both chromosomes of the cholera pathogen Vibrio cholerae.</title>
        <authorList>
            <person name="Heidelberg J.F."/>
            <person name="Eisen J.A."/>
            <person name="Nelson W.C."/>
            <person name="Clayton R.A."/>
            <person name="Gwinn M.L."/>
            <person name="Dodson R.J."/>
            <person name="Haft D.H."/>
            <person name="Hickey E.K."/>
            <person name="Peterson J.D."/>
            <person name="Umayam L.A."/>
            <person name="Gill S.R."/>
            <person name="Nelson K.E."/>
            <person name="Read T.D."/>
            <person name="Tettelin H."/>
            <person name="Richardson D.L."/>
            <person name="Ermolaeva M.D."/>
            <person name="Vamathevan J.J."/>
            <person name="Bass S."/>
            <person name="Qin H."/>
            <person name="Dragoi I."/>
            <person name="Sellers P."/>
            <person name="McDonald L.A."/>
            <person name="Utterback T.R."/>
            <person name="Fleischmann R.D."/>
            <person name="Nierman W.C."/>
            <person name="White O."/>
            <person name="Salzberg S.L."/>
            <person name="Smith H.O."/>
            <person name="Colwell R.R."/>
            <person name="Mekalanos J.J."/>
            <person name="Venter J.C."/>
            <person name="Fraser C.M."/>
        </authorList>
    </citation>
    <scope>NUCLEOTIDE SEQUENCE [LARGE SCALE GENOMIC DNA]</scope>
    <source>
        <strain>ATCC 39315 / El Tor Inaba N16961</strain>
    </source>
</reference>
<proteinExistence type="inferred from homology"/>
<gene>
    <name evidence="1" type="primary">pyrI</name>
    <name type="ordered locus">VC_2511</name>
</gene>
<accession>Q9KP65</accession>